<comment type="function">
    <text evidence="1">Provides the (R)-glutamate required for cell wall biosynthesis.</text>
</comment>
<comment type="catalytic activity">
    <reaction evidence="1">
        <text>L-glutamate = D-glutamate</text>
        <dbReference type="Rhea" id="RHEA:12813"/>
        <dbReference type="ChEBI" id="CHEBI:29985"/>
        <dbReference type="ChEBI" id="CHEBI:29986"/>
        <dbReference type="EC" id="5.1.1.3"/>
    </reaction>
</comment>
<comment type="pathway">
    <text evidence="1">Cell wall biogenesis; peptidoglycan biosynthesis.</text>
</comment>
<comment type="similarity">
    <text evidence="1">Belongs to the aspartate/glutamate racemases family.</text>
</comment>
<proteinExistence type="inferred from homology"/>
<sequence length="277" mass="29136">MTTRAQAPVGVFDSGLGGLSVLRAIRAELPAESLLYLADSRHAPYGEKPPEFIAGRTLRVCEWLVGQGCKALVIACNTATAQAVHLLREQLAVPVIGVEPGLKPAVATSRSRVVGVLATESTLRSDKFARLLGNVSGDCRVLCQPGYGLVPLIERGDTHSPAVLELLRAYLLPMLEAGADTLVLGCTHYPFLQDAIREIAGDRLTLIDTGHAVARHLGRTLAAAHLQATGAAASPRFLSTADVLPLQAMVAALLGEAPMAQRIDIGDTAVPPLASHQ</sequence>
<feature type="chain" id="PRO_0000095500" description="Glutamate racemase">
    <location>
        <begin position="1"/>
        <end position="277"/>
    </location>
</feature>
<feature type="active site" description="Proton donor/acceptor" evidence="1">
    <location>
        <position position="76"/>
    </location>
</feature>
<feature type="active site" description="Proton donor/acceptor" evidence="1">
    <location>
        <position position="186"/>
    </location>
</feature>
<feature type="binding site" evidence="1">
    <location>
        <begin position="13"/>
        <end position="14"/>
    </location>
    <ligand>
        <name>substrate</name>
    </ligand>
</feature>
<feature type="binding site" evidence="1">
    <location>
        <begin position="45"/>
        <end position="46"/>
    </location>
    <ligand>
        <name>substrate</name>
    </ligand>
</feature>
<feature type="binding site" evidence="1">
    <location>
        <begin position="77"/>
        <end position="78"/>
    </location>
    <ligand>
        <name>substrate</name>
    </ligand>
</feature>
<feature type="binding site" evidence="1">
    <location>
        <begin position="187"/>
        <end position="188"/>
    </location>
    <ligand>
        <name>substrate</name>
    </ligand>
</feature>
<organism>
    <name type="scientific">Ralstonia nicotianae (strain ATCC BAA-1114 / GMI1000)</name>
    <name type="common">Ralstonia solanacearum</name>
    <dbReference type="NCBI Taxonomy" id="267608"/>
    <lineage>
        <taxon>Bacteria</taxon>
        <taxon>Pseudomonadati</taxon>
        <taxon>Pseudomonadota</taxon>
        <taxon>Betaproteobacteria</taxon>
        <taxon>Burkholderiales</taxon>
        <taxon>Burkholderiaceae</taxon>
        <taxon>Ralstonia</taxon>
        <taxon>Ralstonia solanacearum species complex</taxon>
    </lineage>
</organism>
<gene>
    <name evidence="1" type="primary">murI</name>
    <name type="ordered locus">RSc1956</name>
    <name type="ORF">RS03530</name>
</gene>
<protein>
    <recommendedName>
        <fullName evidence="1">Glutamate racemase</fullName>
        <ecNumber evidence="1">5.1.1.3</ecNumber>
    </recommendedName>
</protein>
<accession>Q8XY07</accession>
<evidence type="ECO:0000255" key="1">
    <source>
        <dbReference type="HAMAP-Rule" id="MF_00258"/>
    </source>
</evidence>
<dbReference type="EC" id="5.1.1.3" evidence="1"/>
<dbReference type="EMBL" id="AL646052">
    <property type="protein sequence ID" value="CAD15658.1"/>
    <property type="molecule type" value="Genomic_DNA"/>
</dbReference>
<dbReference type="RefSeq" id="WP_011001893.1">
    <property type="nucleotide sequence ID" value="NC_003295.1"/>
</dbReference>
<dbReference type="SMR" id="Q8XY07"/>
<dbReference type="STRING" id="267608.RSc1956"/>
<dbReference type="EnsemblBacteria" id="CAD15658">
    <property type="protein sequence ID" value="CAD15658"/>
    <property type="gene ID" value="RSc1956"/>
</dbReference>
<dbReference type="KEGG" id="rso:RSc1956"/>
<dbReference type="eggNOG" id="COG0796">
    <property type="taxonomic scope" value="Bacteria"/>
</dbReference>
<dbReference type="HOGENOM" id="CLU_052344_2_1_4"/>
<dbReference type="UniPathway" id="UPA00219"/>
<dbReference type="PHI-base" id="PHI:10682"/>
<dbReference type="Proteomes" id="UP000001436">
    <property type="component" value="Chromosome"/>
</dbReference>
<dbReference type="GO" id="GO:0008881">
    <property type="term" value="F:glutamate racemase activity"/>
    <property type="evidence" value="ECO:0007669"/>
    <property type="project" value="UniProtKB-UniRule"/>
</dbReference>
<dbReference type="GO" id="GO:0071555">
    <property type="term" value="P:cell wall organization"/>
    <property type="evidence" value="ECO:0007669"/>
    <property type="project" value="UniProtKB-KW"/>
</dbReference>
<dbReference type="GO" id="GO:0009252">
    <property type="term" value="P:peptidoglycan biosynthetic process"/>
    <property type="evidence" value="ECO:0007669"/>
    <property type="project" value="UniProtKB-UniRule"/>
</dbReference>
<dbReference type="GO" id="GO:0008360">
    <property type="term" value="P:regulation of cell shape"/>
    <property type="evidence" value="ECO:0007669"/>
    <property type="project" value="UniProtKB-KW"/>
</dbReference>
<dbReference type="FunFam" id="3.40.50.1860:FF:000001">
    <property type="entry name" value="Glutamate racemase"/>
    <property type="match status" value="1"/>
</dbReference>
<dbReference type="Gene3D" id="3.40.50.1860">
    <property type="match status" value="2"/>
</dbReference>
<dbReference type="HAMAP" id="MF_00258">
    <property type="entry name" value="Glu_racemase"/>
    <property type="match status" value="1"/>
</dbReference>
<dbReference type="InterPro" id="IPR015942">
    <property type="entry name" value="Asp/Glu/hydantoin_racemase"/>
</dbReference>
<dbReference type="InterPro" id="IPR001920">
    <property type="entry name" value="Asp/Glu_race"/>
</dbReference>
<dbReference type="InterPro" id="IPR018187">
    <property type="entry name" value="Asp/Glu_racemase_AS_1"/>
</dbReference>
<dbReference type="InterPro" id="IPR033134">
    <property type="entry name" value="Asp/Glu_racemase_AS_2"/>
</dbReference>
<dbReference type="InterPro" id="IPR004391">
    <property type="entry name" value="Glu_race"/>
</dbReference>
<dbReference type="NCBIfam" id="TIGR00067">
    <property type="entry name" value="glut_race"/>
    <property type="match status" value="1"/>
</dbReference>
<dbReference type="PANTHER" id="PTHR21198">
    <property type="entry name" value="GLUTAMATE RACEMASE"/>
    <property type="match status" value="1"/>
</dbReference>
<dbReference type="PANTHER" id="PTHR21198:SF2">
    <property type="entry name" value="GLUTAMATE RACEMASE"/>
    <property type="match status" value="1"/>
</dbReference>
<dbReference type="Pfam" id="PF01177">
    <property type="entry name" value="Asp_Glu_race"/>
    <property type="match status" value="1"/>
</dbReference>
<dbReference type="SUPFAM" id="SSF53681">
    <property type="entry name" value="Aspartate/glutamate racemase"/>
    <property type="match status" value="2"/>
</dbReference>
<dbReference type="PROSITE" id="PS00923">
    <property type="entry name" value="ASP_GLU_RACEMASE_1"/>
    <property type="match status" value="1"/>
</dbReference>
<dbReference type="PROSITE" id="PS00924">
    <property type="entry name" value="ASP_GLU_RACEMASE_2"/>
    <property type="match status" value="1"/>
</dbReference>
<name>MURI_RALN1</name>
<keyword id="KW-0133">Cell shape</keyword>
<keyword id="KW-0961">Cell wall biogenesis/degradation</keyword>
<keyword id="KW-0413">Isomerase</keyword>
<keyword id="KW-0573">Peptidoglycan synthesis</keyword>
<keyword id="KW-1185">Reference proteome</keyword>
<reference key="1">
    <citation type="journal article" date="2002" name="Nature">
        <title>Genome sequence of the plant pathogen Ralstonia solanacearum.</title>
        <authorList>
            <person name="Salanoubat M."/>
            <person name="Genin S."/>
            <person name="Artiguenave F."/>
            <person name="Gouzy J."/>
            <person name="Mangenot S."/>
            <person name="Arlat M."/>
            <person name="Billault A."/>
            <person name="Brottier P."/>
            <person name="Camus J.-C."/>
            <person name="Cattolico L."/>
            <person name="Chandler M."/>
            <person name="Choisne N."/>
            <person name="Claudel-Renard C."/>
            <person name="Cunnac S."/>
            <person name="Demange N."/>
            <person name="Gaspin C."/>
            <person name="Lavie M."/>
            <person name="Moisan A."/>
            <person name="Robert C."/>
            <person name="Saurin W."/>
            <person name="Schiex T."/>
            <person name="Siguier P."/>
            <person name="Thebault P."/>
            <person name="Whalen M."/>
            <person name="Wincker P."/>
            <person name="Levy M."/>
            <person name="Weissenbach J."/>
            <person name="Boucher C.A."/>
        </authorList>
    </citation>
    <scope>NUCLEOTIDE SEQUENCE [LARGE SCALE GENOMIC DNA]</scope>
    <source>
        <strain>ATCC BAA-1114 / GMI1000</strain>
    </source>
</reference>